<dbReference type="EC" id="2.5.1.-" evidence="1"/>
<dbReference type="EMBL" id="CU928158">
    <property type="protein sequence ID" value="CAQ88726.1"/>
    <property type="molecule type" value="Genomic_DNA"/>
</dbReference>
<dbReference type="RefSeq" id="WP_000564756.1">
    <property type="nucleotide sequence ID" value="NC_011740.1"/>
</dbReference>
<dbReference type="SMR" id="B7LPH3"/>
<dbReference type="GeneID" id="75057751"/>
<dbReference type="KEGG" id="efe:EFER_1201"/>
<dbReference type="HOGENOM" id="CLU_052665_0_0_6"/>
<dbReference type="OrthoDB" id="9773188at2"/>
<dbReference type="Proteomes" id="UP000000745">
    <property type="component" value="Chromosome"/>
</dbReference>
<dbReference type="GO" id="GO:0008168">
    <property type="term" value="F:methyltransferase activity"/>
    <property type="evidence" value="ECO:0007669"/>
    <property type="project" value="TreeGrafter"/>
</dbReference>
<dbReference type="GO" id="GO:0016765">
    <property type="term" value="F:transferase activity, transferring alkyl or aryl (other than methyl) groups"/>
    <property type="evidence" value="ECO:0007669"/>
    <property type="project" value="UniProtKB-UniRule"/>
</dbReference>
<dbReference type="GO" id="GO:0002098">
    <property type="term" value="P:tRNA wobble uridine modification"/>
    <property type="evidence" value="ECO:0007669"/>
    <property type="project" value="InterPro"/>
</dbReference>
<dbReference type="CDD" id="cd02440">
    <property type="entry name" value="AdoMet_MTases"/>
    <property type="match status" value="1"/>
</dbReference>
<dbReference type="FunFam" id="3.40.50.150:FF:000080">
    <property type="entry name" value="tRNA U34 carboxymethyltransferase"/>
    <property type="match status" value="1"/>
</dbReference>
<dbReference type="Gene3D" id="3.40.50.150">
    <property type="entry name" value="Vaccinia Virus protein VP39"/>
    <property type="match status" value="1"/>
</dbReference>
<dbReference type="HAMAP" id="MF_01590">
    <property type="entry name" value="tRNA_carboxymethyltr_CmoB"/>
    <property type="match status" value="1"/>
</dbReference>
<dbReference type="InterPro" id="IPR010017">
    <property type="entry name" value="CmoB"/>
</dbReference>
<dbReference type="InterPro" id="IPR027555">
    <property type="entry name" value="Mo5U34_MeTrfas-like"/>
</dbReference>
<dbReference type="InterPro" id="IPR029063">
    <property type="entry name" value="SAM-dependent_MTases_sf"/>
</dbReference>
<dbReference type="NCBIfam" id="NF011650">
    <property type="entry name" value="PRK15068.1"/>
    <property type="match status" value="1"/>
</dbReference>
<dbReference type="NCBIfam" id="TIGR00452">
    <property type="entry name" value="tRNA 5-methoxyuridine(34)/uridine 5-oxyacetic acid(34) synthase CmoB"/>
    <property type="match status" value="1"/>
</dbReference>
<dbReference type="PANTHER" id="PTHR43464">
    <property type="entry name" value="METHYLTRANSFERASE"/>
    <property type="match status" value="1"/>
</dbReference>
<dbReference type="PANTHER" id="PTHR43464:SF95">
    <property type="entry name" value="TRNA U34 CARBOXYMETHYLTRANSFERASE"/>
    <property type="match status" value="1"/>
</dbReference>
<dbReference type="Pfam" id="PF08003">
    <property type="entry name" value="Methyltransf_9"/>
    <property type="match status" value="1"/>
</dbReference>
<dbReference type="SUPFAM" id="SSF53335">
    <property type="entry name" value="S-adenosyl-L-methionine-dependent methyltransferases"/>
    <property type="match status" value="1"/>
</dbReference>
<sequence>MIDFGNFYSLIAKNHLSHWLETLPAQIASWQREQQHGLFKQWSNAVEFLPEIKPYRLDLLHSVTAESEEPLSAGQIKRIETLMRNLMPWRKGPFSLYGVNIDTEWRSDWKWDRVLPHLSDLTGRTILDVGCGSGYHMWRMIGAGAHLAVGIDPTQLFLCQFEAVRKLLGNDQRAHLLPLGIEQLPALKAFDTVFSMGVLYHRRSPLEHLWQLKDQLVNEGELVLETLIIDGDENTVLVPGDRYAQMRNVYFIPSALALKNWLKKCGFVDIRIADVSVTTTEEQRRTEWMVTESLSDFLDPHDPGKTVEGYPAPKRAVLIARKP</sequence>
<evidence type="ECO:0000255" key="1">
    <source>
        <dbReference type="HAMAP-Rule" id="MF_01590"/>
    </source>
</evidence>
<keyword id="KW-0808">Transferase</keyword>
<keyword id="KW-0819">tRNA processing</keyword>
<gene>
    <name evidence="1" type="primary">cmoB</name>
    <name type="ordered locus">EFER_1201</name>
</gene>
<name>CMOB_ESCF3</name>
<accession>B7LPH3</accession>
<reference key="1">
    <citation type="journal article" date="2009" name="PLoS Genet.">
        <title>Organised genome dynamics in the Escherichia coli species results in highly diverse adaptive paths.</title>
        <authorList>
            <person name="Touchon M."/>
            <person name="Hoede C."/>
            <person name="Tenaillon O."/>
            <person name="Barbe V."/>
            <person name="Baeriswyl S."/>
            <person name="Bidet P."/>
            <person name="Bingen E."/>
            <person name="Bonacorsi S."/>
            <person name="Bouchier C."/>
            <person name="Bouvet O."/>
            <person name="Calteau A."/>
            <person name="Chiapello H."/>
            <person name="Clermont O."/>
            <person name="Cruveiller S."/>
            <person name="Danchin A."/>
            <person name="Diard M."/>
            <person name="Dossat C."/>
            <person name="Karoui M.E."/>
            <person name="Frapy E."/>
            <person name="Garry L."/>
            <person name="Ghigo J.M."/>
            <person name="Gilles A.M."/>
            <person name="Johnson J."/>
            <person name="Le Bouguenec C."/>
            <person name="Lescat M."/>
            <person name="Mangenot S."/>
            <person name="Martinez-Jehanne V."/>
            <person name="Matic I."/>
            <person name="Nassif X."/>
            <person name="Oztas S."/>
            <person name="Petit M.A."/>
            <person name="Pichon C."/>
            <person name="Rouy Z."/>
            <person name="Ruf C.S."/>
            <person name="Schneider D."/>
            <person name="Tourret J."/>
            <person name="Vacherie B."/>
            <person name="Vallenet D."/>
            <person name="Medigue C."/>
            <person name="Rocha E.P.C."/>
            <person name="Denamur E."/>
        </authorList>
    </citation>
    <scope>NUCLEOTIDE SEQUENCE [LARGE SCALE GENOMIC DNA]</scope>
    <source>
        <strain>ATCC 35469 / DSM 13698 / BCRC 15582 / CCUG 18766 / IAM 14443 / JCM 21226 / LMG 7866 / NBRC 102419 / NCTC 12128 / CDC 0568-73</strain>
    </source>
</reference>
<comment type="function">
    <text evidence="1">Catalyzes carboxymethyl transfer from carboxy-S-adenosyl-L-methionine (Cx-SAM) to 5-hydroxyuridine (ho5U) to form 5-carboxymethoxyuridine (cmo5U) at position 34 in tRNAs.</text>
</comment>
<comment type="catalytic activity">
    <reaction evidence="1">
        <text>carboxy-S-adenosyl-L-methionine + 5-hydroxyuridine(34) in tRNA = 5-carboxymethoxyuridine(34) in tRNA + S-adenosyl-L-homocysteine + H(+)</text>
        <dbReference type="Rhea" id="RHEA:52848"/>
        <dbReference type="Rhea" id="RHEA-COMP:13381"/>
        <dbReference type="Rhea" id="RHEA-COMP:13383"/>
        <dbReference type="ChEBI" id="CHEBI:15378"/>
        <dbReference type="ChEBI" id="CHEBI:57856"/>
        <dbReference type="ChEBI" id="CHEBI:134278"/>
        <dbReference type="ChEBI" id="CHEBI:136877"/>
        <dbReference type="ChEBI" id="CHEBI:136879"/>
    </reaction>
</comment>
<comment type="subunit">
    <text evidence="1">Homotetramer.</text>
</comment>
<comment type="similarity">
    <text evidence="1">Belongs to the class I-like SAM-binding methyltransferase superfamily. CmoB family.</text>
</comment>
<organism>
    <name type="scientific">Escherichia fergusonii (strain ATCC 35469 / DSM 13698 / CCUG 18766 / IAM 14443 / JCM 21226 / LMG 7866 / NBRC 102419 / NCTC 12128 / CDC 0568-73)</name>
    <dbReference type="NCBI Taxonomy" id="585054"/>
    <lineage>
        <taxon>Bacteria</taxon>
        <taxon>Pseudomonadati</taxon>
        <taxon>Pseudomonadota</taxon>
        <taxon>Gammaproteobacteria</taxon>
        <taxon>Enterobacterales</taxon>
        <taxon>Enterobacteriaceae</taxon>
        <taxon>Escherichia</taxon>
    </lineage>
</organism>
<proteinExistence type="inferred from homology"/>
<feature type="chain" id="PRO_1000201297" description="tRNA U34 carboxymethyltransferase">
    <location>
        <begin position="1"/>
        <end position="323"/>
    </location>
</feature>
<feature type="binding site" evidence="1">
    <location>
        <position position="91"/>
    </location>
    <ligand>
        <name>carboxy-S-adenosyl-L-methionine</name>
        <dbReference type="ChEBI" id="CHEBI:134278"/>
    </ligand>
</feature>
<feature type="binding site" evidence="1">
    <location>
        <position position="105"/>
    </location>
    <ligand>
        <name>carboxy-S-adenosyl-L-methionine</name>
        <dbReference type="ChEBI" id="CHEBI:134278"/>
    </ligand>
</feature>
<feature type="binding site" evidence="1">
    <location>
        <position position="110"/>
    </location>
    <ligand>
        <name>carboxy-S-adenosyl-L-methionine</name>
        <dbReference type="ChEBI" id="CHEBI:134278"/>
    </ligand>
</feature>
<feature type="binding site" evidence="1">
    <location>
        <position position="130"/>
    </location>
    <ligand>
        <name>carboxy-S-adenosyl-L-methionine</name>
        <dbReference type="ChEBI" id="CHEBI:134278"/>
    </ligand>
</feature>
<feature type="binding site" evidence="1">
    <location>
        <begin position="152"/>
        <end position="154"/>
    </location>
    <ligand>
        <name>carboxy-S-adenosyl-L-methionine</name>
        <dbReference type="ChEBI" id="CHEBI:134278"/>
    </ligand>
</feature>
<feature type="binding site" evidence="1">
    <location>
        <begin position="181"/>
        <end position="182"/>
    </location>
    <ligand>
        <name>carboxy-S-adenosyl-L-methionine</name>
        <dbReference type="ChEBI" id="CHEBI:134278"/>
    </ligand>
</feature>
<feature type="binding site" evidence="1">
    <location>
        <position position="196"/>
    </location>
    <ligand>
        <name>carboxy-S-adenosyl-L-methionine</name>
        <dbReference type="ChEBI" id="CHEBI:134278"/>
    </ligand>
</feature>
<feature type="binding site" evidence="1">
    <location>
        <position position="200"/>
    </location>
    <ligand>
        <name>carboxy-S-adenosyl-L-methionine</name>
        <dbReference type="ChEBI" id="CHEBI:134278"/>
    </ligand>
</feature>
<feature type="binding site" evidence="1">
    <location>
        <position position="315"/>
    </location>
    <ligand>
        <name>carboxy-S-adenosyl-L-methionine</name>
        <dbReference type="ChEBI" id="CHEBI:134278"/>
    </ligand>
</feature>
<protein>
    <recommendedName>
        <fullName evidence="1">tRNA U34 carboxymethyltransferase</fullName>
        <ecNumber evidence="1">2.5.1.-</ecNumber>
    </recommendedName>
</protein>